<keyword id="KW-0028">Amino-acid biosynthesis</keyword>
<keyword id="KW-0963">Cytoplasm</keyword>
<keyword id="KW-0368">Histidine biosynthesis</keyword>
<keyword id="KW-0413">Isomerase</keyword>
<reference key="1">
    <citation type="journal article" date="2002" name="Nature">
        <title>Comparison of the genomes of two Xanthomonas pathogens with differing host specificities.</title>
        <authorList>
            <person name="da Silva A.C.R."/>
            <person name="Ferro J.A."/>
            <person name="Reinach F.C."/>
            <person name="Farah C.S."/>
            <person name="Furlan L.R."/>
            <person name="Quaggio R.B."/>
            <person name="Monteiro-Vitorello C.B."/>
            <person name="Van Sluys M.A."/>
            <person name="Almeida N.F. Jr."/>
            <person name="Alves L.M.C."/>
            <person name="do Amaral A.M."/>
            <person name="Bertolini M.C."/>
            <person name="Camargo L.E.A."/>
            <person name="Camarotte G."/>
            <person name="Cannavan F."/>
            <person name="Cardozo J."/>
            <person name="Chambergo F."/>
            <person name="Ciapina L.P."/>
            <person name="Cicarelli R.M.B."/>
            <person name="Coutinho L.L."/>
            <person name="Cursino-Santos J.R."/>
            <person name="El-Dorry H."/>
            <person name="Faria J.B."/>
            <person name="Ferreira A.J.S."/>
            <person name="Ferreira R.C.C."/>
            <person name="Ferro M.I.T."/>
            <person name="Formighieri E.F."/>
            <person name="Franco M.C."/>
            <person name="Greggio C.C."/>
            <person name="Gruber A."/>
            <person name="Katsuyama A.M."/>
            <person name="Kishi L.T."/>
            <person name="Leite R.P."/>
            <person name="Lemos E.G.M."/>
            <person name="Lemos M.V.F."/>
            <person name="Locali E.C."/>
            <person name="Machado M.A."/>
            <person name="Madeira A.M.B.N."/>
            <person name="Martinez-Rossi N.M."/>
            <person name="Martins E.C."/>
            <person name="Meidanis J."/>
            <person name="Menck C.F.M."/>
            <person name="Miyaki C.Y."/>
            <person name="Moon D.H."/>
            <person name="Moreira L.M."/>
            <person name="Novo M.T.M."/>
            <person name="Okura V.K."/>
            <person name="Oliveira M.C."/>
            <person name="Oliveira V.R."/>
            <person name="Pereira H.A."/>
            <person name="Rossi A."/>
            <person name="Sena J.A.D."/>
            <person name="Silva C."/>
            <person name="de Souza R.F."/>
            <person name="Spinola L.A.F."/>
            <person name="Takita M.A."/>
            <person name="Tamura R.E."/>
            <person name="Teixeira E.C."/>
            <person name="Tezza R.I.D."/>
            <person name="Trindade dos Santos M."/>
            <person name="Truffi D."/>
            <person name="Tsai S.M."/>
            <person name="White F.F."/>
            <person name="Setubal J.C."/>
            <person name="Kitajima J.P."/>
        </authorList>
    </citation>
    <scope>NUCLEOTIDE SEQUENCE [LARGE SCALE GENOMIC DNA]</scope>
    <source>
        <strain>306</strain>
    </source>
</reference>
<organism>
    <name type="scientific">Xanthomonas axonopodis pv. citri (strain 306)</name>
    <dbReference type="NCBI Taxonomy" id="190486"/>
    <lineage>
        <taxon>Bacteria</taxon>
        <taxon>Pseudomonadati</taxon>
        <taxon>Pseudomonadota</taxon>
        <taxon>Gammaproteobacteria</taxon>
        <taxon>Lysobacterales</taxon>
        <taxon>Lysobacteraceae</taxon>
        <taxon>Xanthomonas</taxon>
    </lineage>
</organism>
<sequence>MSFTVYPALDIRNARVVRLLQGDYARETQYGDDVLPRAQAFADAGAQWMHLVDLDAAKAGGYTLAGTLGEIARATGLRVQTGGGVRSREDVARILDAGAARVVIGSLAVRNSEMVVGWLQEFGADRLTIALDTRQDADGIWQLPVHGWTEAADATLDQLAVRYARAGLQHLLCTDIARDGMLSGPNMALYGHLRALTPQLQVQVSGGARNLADVAAAKAAGCAGIVLGKALLEGHLNLDEALAC</sequence>
<dbReference type="EC" id="5.3.1.16" evidence="1"/>
<dbReference type="EMBL" id="AE008923">
    <property type="protein sequence ID" value="AAM36695.1"/>
    <property type="molecule type" value="Genomic_DNA"/>
</dbReference>
<dbReference type="RefSeq" id="WP_011051172.1">
    <property type="nucleotide sequence ID" value="NC_003919.1"/>
</dbReference>
<dbReference type="SMR" id="Q8PLG7"/>
<dbReference type="GeneID" id="66910979"/>
<dbReference type="KEGG" id="xac:XAC1833"/>
<dbReference type="eggNOG" id="COG0106">
    <property type="taxonomic scope" value="Bacteria"/>
</dbReference>
<dbReference type="HOGENOM" id="CLU_048577_1_2_6"/>
<dbReference type="UniPathway" id="UPA00031">
    <property type="reaction ID" value="UER00009"/>
</dbReference>
<dbReference type="Proteomes" id="UP000000576">
    <property type="component" value="Chromosome"/>
</dbReference>
<dbReference type="GO" id="GO:0005737">
    <property type="term" value="C:cytoplasm"/>
    <property type="evidence" value="ECO:0007669"/>
    <property type="project" value="UniProtKB-SubCell"/>
</dbReference>
<dbReference type="GO" id="GO:0003949">
    <property type="term" value="F:1-(5-phosphoribosyl)-5-[(5-phosphoribosylamino)methylideneamino]imidazole-4-carboxamide isomerase activity"/>
    <property type="evidence" value="ECO:0007669"/>
    <property type="project" value="UniProtKB-UniRule"/>
</dbReference>
<dbReference type="GO" id="GO:0000105">
    <property type="term" value="P:L-histidine biosynthetic process"/>
    <property type="evidence" value="ECO:0007669"/>
    <property type="project" value="UniProtKB-UniRule"/>
</dbReference>
<dbReference type="GO" id="GO:0000162">
    <property type="term" value="P:L-tryptophan biosynthetic process"/>
    <property type="evidence" value="ECO:0007669"/>
    <property type="project" value="TreeGrafter"/>
</dbReference>
<dbReference type="CDD" id="cd04732">
    <property type="entry name" value="HisA"/>
    <property type="match status" value="1"/>
</dbReference>
<dbReference type="FunFam" id="3.20.20.70:FF:000009">
    <property type="entry name" value="1-(5-phosphoribosyl)-5-[(5-phosphoribosylamino)methylideneamino] imidazole-4-carboxamide isomerase"/>
    <property type="match status" value="1"/>
</dbReference>
<dbReference type="Gene3D" id="3.20.20.70">
    <property type="entry name" value="Aldolase class I"/>
    <property type="match status" value="1"/>
</dbReference>
<dbReference type="HAMAP" id="MF_01014">
    <property type="entry name" value="HisA"/>
    <property type="match status" value="1"/>
</dbReference>
<dbReference type="InterPro" id="IPR013785">
    <property type="entry name" value="Aldolase_TIM"/>
</dbReference>
<dbReference type="InterPro" id="IPR006062">
    <property type="entry name" value="His_biosynth"/>
</dbReference>
<dbReference type="InterPro" id="IPR006063">
    <property type="entry name" value="HisA_bact_arch"/>
</dbReference>
<dbReference type="InterPro" id="IPR044524">
    <property type="entry name" value="Isoase_HisA-like"/>
</dbReference>
<dbReference type="InterPro" id="IPR023016">
    <property type="entry name" value="Isoase_HisA-like_bact"/>
</dbReference>
<dbReference type="InterPro" id="IPR011060">
    <property type="entry name" value="RibuloseP-bd_barrel"/>
</dbReference>
<dbReference type="NCBIfam" id="TIGR00007">
    <property type="entry name" value="1-(5-phosphoribosyl)-5-[(5-phosphoribosylamino)methylideneamino]imidazole-4-carboxamide isomerase"/>
    <property type="match status" value="1"/>
</dbReference>
<dbReference type="PANTHER" id="PTHR43090">
    <property type="entry name" value="1-(5-PHOSPHORIBOSYL)-5-[(5-PHOSPHORIBOSYLAMINO)METHYLIDENEAMINO] IMIDAZOLE-4-CARBOXAMIDE ISOMERASE"/>
    <property type="match status" value="1"/>
</dbReference>
<dbReference type="PANTHER" id="PTHR43090:SF2">
    <property type="entry name" value="1-(5-PHOSPHORIBOSYL)-5-[(5-PHOSPHORIBOSYLAMINO)METHYLIDENEAMINO] IMIDAZOLE-4-CARBOXAMIDE ISOMERASE"/>
    <property type="match status" value="1"/>
</dbReference>
<dbReference type="Pfam" id="PF00977">
    <property type="entry name" value="His_biosynth"/>
    <property type="match status" value="1"/>
</dbReference>
<dbReference type="SUPFAM" id="SSF51366">
    <property type="entry name" value="Ribulose-phoshate binding barrel"/>
    <property type="match status" value="1"/>
</dbReference>
<proteinExistence type="inferred from homology"/>
<feature type="chain" id="PRO_0000142076" description="1-(5-phosphoribosyl)-5-[(5-phosphoribosylamino)methylideneamino] imidazole-4-carboxamide isomerase">
    <location>
        <begin position="1"/>
        <end position="244"/>
    </location>
</feature>
<feature type="active site" description="Proton acceptor" evidence="1">
    <location>
        <position position="10"/>
    </location>
</feature>
<feature type="active site" description="Proton donor" evidence="1">
    <location>
        <position position="132"/>
    </location>
</feature>
<comment type="catalytic activity">
    <reaction evidence="1">
        <text>1-(5-phospho-beta-D-ribosyl)-5-[(5-phospho-beta-D-ribosylamino)methylideneamino]imidazole-4-carboxamide = 5-[(5-phospho-1-deoxy-D-ribulos-1-ylimino)methylamino]-1-(5-phospho-beta-D-ribosyl)imidazole-4-carboxamide</text>
        <dbReference type="Rhea" id="RHEA:15469"/>
        <dbReference type="ChEBI" id="CHEBI:58435"/>
        <dbReference type="ChEBI" id="CHEBI:58525"/>
        <dbReference type="EC" id="5.3.1.16"/>
    </reaction>
</comment>
<comment type="pathway">
    <text evidence="1">Amino-acid biosynthesis; L-histidine biosynthesis; L-histidine from 5-phospho-alpha-D-ribose 1-diphosphate: step 4/9.</text>
</comment>
<comment type="subcellular location">
    <subcellularLocation>
        <location evidence="1">Cytoplasm</location>
    </subcellularLocation>
</comment>
<comment type="similarity">
    <text evidence="1">Belongs to the HisA/HisF family.</text>
</comment>
<protein>
    <recommendedName>
        <fullName evidence="1">1-(5-phosphoribosyl)-5-[(5-phosphoribosylamino)methylideneamino] imidazole-4-carboxamide isomerase</fullName>
        <ecNumber evidence="1">5.3.1.16</ecNumber>
    </recommendedName>
    <alternativeName>
        <fullName evidence="1">Phosphoribosylformimino-5-aminoimidazole carboxamide ribotide isomerase</fullName>
    </alternativeName>
</protein>
<name>HIS4_XANAC</name>
<gene>
    <name evidence="1" type="primary">hisA</name>
    <name type="ordered locus">XAC1833</name>
</gene>
<accession>Q8PLG7</accession>
<evidence type="ECO:0000255" key="1">
    <source>
        <dbReference type="HAMAP-Rule" id="MF_01014"/>
    </source>
</evidence>